<reference key="1">
    <citation type="journal article" date="2009" name="Biochim. Biophys. Acta">
        <title>cDNA cloning and characterization of human and mouse Ca(2+)-independent phosphatidylethanolamine N-acyltransferases.</title>
        <authorList>
            <person name="Jin X.-H."/>
            <person name="Uyama T."/>
            <person name="Wang J."/>
            <person name="Okamoto Y."/>
            <person name="Tonai T."/>
            <person name="Ueda N."/>
        </authorList>
    </citation>
    <scope>NUCLEOTIDE SEQUENCE [MRNA] (ISOFORM 4)</scope>
    <scope>FUNCTION (ISOFORM 4)</scope>
    <scope>TISSUE SPECIFICITY (ISOFORM 4)</scope>
    <scope>CATALYTIC ACTIVITY (ISOFORM 4)</scope>
</reference>
<reference key="2">
    <citation type="submission" date="2006-05" db="EMBL/GenBank/DDBJ databases">
        <authorList>
            <person name="Okamoto Y."/>
            <person name="Jin X."/>
            <person name="Ueda N."/>
        </authorList>
    </citation>
    <scope>NUCLEOTIDE SEQUENCE [MRNA] (ISOFORM 4)</scope>
</reference>
<reference key="3">
    <citation type="journal article" date="2005" name="Science">
        <title>The transcriptional landscape of the mammalian genome.</title>
        <authorList>
            <person name="Carninci P."/>
            <person name="Kasukawa T."/>
            <person name="Katayama S."/>
            <person name="Gough J."/>
            <person name="Frith M.C."/>
            <person name="Maeda N."/>
            <person name="Oyama R."/>
            <person name="Ravasi T."/>
            <person name="Lenhard B."/>
            <person name="Wells C."/>
            <person name="Kodzius R."/>
            <person name="Shimokawa K."/>
            <person name="Bajic V.B."/>
            <person name="Brenner S.E."/>
            <person name="Batalov S."/>
            <person name="Forrest A.R."/>
            <person name="Zavolan M."/>
            <person name="Davis M.J."/>
            <person name="Wilming L.G."/>
            <person name="Aidinis V."/>
            <person name="Allen J.E."/>
            <person name="Ambesi-Impiombato A."/>
            <person name="Apweiler R."/>
            <person name="Aturaliya R.N."/>
            <person name="Bailey T.L."/>
            <person name="Bansal M."/>
            <person name="Baxter L."/>
            <person name="Beisel K.W."/>
            <person name="Bersano T."/>
            <person name="Bono H."/>
            <person name="Chalk A.M."/>
            <person name="Chiu K.P."/>
            <person name="Choudhary V."/>
            <person name="Christoffels A."/>
            <person name="Clutterbuck D.R."/>
            <person name="Crowe M.L."/>
            <person name="Dalla E."/>
            <person name="Dalrymple B.P."/>
            <person name="de Bono B."/>
            <person name="Della Gatta G."/>
            <person name="di Bernardo D."/>
            <person name="Down T."/>
            <person name="Engstrom P."/>
            <person name="Fagiolini M."/>
            <person name="Faulkner G."/>
            <person name="Fletcher C.F."/>
            <person name="Fukushima T."/>
            <person name="Furuno M."/>
            <person name="Futaki S."/>
            <person name="Gariboldi M."/>
            <person name="Georgii-Hemming P."/>
            <person name="Gingeras T.R."/>
            <person name="Gojobori T."/>
            <person name="Green R.E."/>
            <person name="Gustincich S."/>
            <person name="Harbers M."/>
            <person name="Hayashi Y."/>
            <person name="Hensch T.K."/>
            <person name="Hirokawa N."/>
            <person name="Hill D."/>
            <person name="Huminiecki L."/>
            <person name="Iacono M."/>
            <person name="Ikeo K."/>
            <person name="Iwama A."/>
            <person name="Ishikawa T."/>
            <person name="Jakt M."/>
            <person name="Kanapin A."/>
            <person name="Katoh M."/>
            <person name="Kawasawa Y."/>
            <person name="Kelso J."/>
            <person name="Kitamura H."/>
            <person name="Kitano H."/>
            <person name="Kollias G."/>
            <person name="Krishnan S.P."/>
            <person name="Kruger A."/>
            <person name="Kummerfeld S.K."/>
            <person name="Kurochkin I.V."/>
            <person name="Lareau L.F."/>
            <person name="Lazarevic D."/>
            <person name="Lipovich L."/>
            <person name="Liu J."/>
            <person name="Liuni S."/>
            <person name="McWilliam S."/>
            <person name="Madan Babu M."/>
            <person name="Madera M."/>
            <person name="Marchionni L."/>
            <person name="Matsuda H."/>
            <person name="Matsuzawa S."/>
            <person name="Miki H."/>
            <person name="Mignone F."/>
            <person name="Miyake S."/>
            <person name="Morris K."/>
            <person name="Mottagui-Tabar S."/>
            <person name="Mulder N."/>
            <person name="Nakano N."/>
            <person name="Nakauchi H."/>
            <person name="Ng P."/>
            <person name="Nilsson R."/>
            <person name="Nishiguchi S."/>
            <person name="Nishikawa S."/>
            <person name="Nori F."/>
            <person name="Ohara O."/>
            <person name="Okazaki Y."/>
            <person name="Orlando V."/>
            <person name="Pang K.C."/>
            <person name="Pavan W.J."/>
            <person name="Pavesi G."/>
            <person name="Pesole G."/>
            <person name="Petrovsky N."/>
            <person name="Piazza S."/>
            <person name="Reed J."/>
            <person name="Reid J.F."/>
            <person name="Ring B.Z."/>
            <person name="Ringwald M."/>
            <person name="Rost B."/>
            <person name="Ruan Y."/>
            <person name="Salzberg S.L."/>
            <person name="Sandelin A."/>
            <person name="Schneider C."/>
            <person name="Schoenbach C."/>
            <person name="Sekiguchi K."/>
            <person name="Semple C.A."/>
            <person name="Seno S."/>
            <person name="Sessa L."/>
            <person name="Sheng Y."/>
            <person name="Shibata Y."/>
            <person name="Shimada H."/>
            <person name="Shimada K."/>
            <person name="Silva D."/>
            <person name="Sinclair B."/>
            <person name="Sperling S."/>
            <person name="Stupka E."/>
            <person name="Sugiura K."/>
            <person name="Sultana R."/>
            <person name="Takenaka Y."/>
            <person name="Taki K."/>
            <person name="Tammoja K."/>
            <person name="Tan S.L."/>
            <person name="Tang S."/>
            <person name="Taylor M.S."/>
            <person name="Tegner J."/>
            <person name="Teichmann S.A."/>
            <person name="Ueda H.R."/>
            <person name="van Nimwegen E."/>
            <person name="Verardo R."/>
            <person name="Wei C.L."/>
            <person name="Yagi K."/>
            <person name="Yamanishi H."/>
            <person name="Zabarovsky E."/>
            <person name="Zhu S."/>
            <person name="Zimmer A."/>
            <person name="Hide W."/>
            <person name="Bult C."/>
            <person name="Grimmond S.M."/>
            <person name="Teasdale R.D."/>
            <person name="Liu E.T."/>
            <person name="Brusic V."/>
            <person name="Quackenbush J."/>
            <person name="Wahlestedt C."/>
            <person name="Mattick J.S."/>
            <person name="Hume D.A."/>
            <person name="Kai C."/>
            <person name="Sasaki D."/>
            <person name="Tomaru Y."/>
            <person name="Fukuda S."/>
            <person name="Kanamori-Katayama M."/>
            <person name="Suzuki M."/>
            <person name="Aoki J."/>
            <person name="Arakawa T."/>
            <person name="Iida J."/>
            <person name="Imamura K."/>
            <person name="Itoh M."/>
            <person name="Kato T."/>
            <person name="Kawaji H."/>
            <person name="Kawagashira N."/>
            <person name="Kawashima T."/>
            <person name="Kojima M."/>
            <person name="Kondo S."/>
            <person name="Konno H."/>
            <person name="Nakano K."/>
            <person name="Ninomiya N."/>
            <person name="Nishio T."/>
            <person name="Okada M."/>
            <person name="Plessy C."/>
            <person name="Shibata K."/>
            <person name="Shiraki T."/>
            <person name="Suzuki S."/>
            <person name="Tagami M."/>
            <person name="Waki K."/>
            <person name="Watahiki A."/>
            <person name="Okamura-Oho Y."/>
            <person name="Suzuki H."/>
            <person name="Kawai J."/>
            <person name="Hayashizaki Y."/>
        </authorList>
    </citation>
    <scope>NUCLEOTIDE SEQUENCE [LARGE SCALE MRNA] (ISOFORMS 1; 2; 3 AND 4)</scope>
    <source>
        <strain>C57BL/6J</strain>
        <tissue>Testis</tissue>
    </source>
</reference>
<reference key="4">
    <citation type="journal article" date="2009" name="PLoS Biol.">
        <title>Lineage-specific biology revealed by a finished genome assembly of the mouse.</title>
        <authorList>
            <person name="Church D.M."/>
            <person name="Goodstadt L."/>
            <person name="Hillier L.W."/>
            <person name="Zody M.C."/>
            <person name="Goldstein S."/>
            <person name="She X."/>
            <person name="Bult C.J."/>
            <person name="Agarwala R."/>
            <person name="Cherry J.L."/>
            <person name="DiCuccio M."/>
            <person name="Hlavina W."/>
            <person name="Kapustin Y."/>
            <person name="Meric P."/>
            <person name="Maglott D."/>
            <person name="Birtle Z."/>
            <person name="Marques A.C."/>
            <person name="Graves T."/>
            <person name="Zhou S."/>
            <person name="Teague B."/>
            <person name="Potamousis K."/>
            <person name="Churas C."/>
            <person name="Place M."/>
            <person name="Herschleb J."/>
            <person name="Runnheim R."/>
            <person name="Forrest D."/>
            <person name="Amos-Landgraf J."/>
            <person name="Schwartz D.C."/>
            <person name="Cheng Z."/>
            <person name="Lindblad-Toh K."/>
            <person name="Eichler E.E."/>
            <person name="Ponting C.P."/>
        </authorList>
    </citation>
    <scope>NUCLEOTIDE SEQUENCE [LARGE SCALE GENOMIC DNA]</scope>
    <source>
        <strain>C57BL/6J</strain>
    </source>
</reference>
<reference key="5">
    <citation type="submission" date="2005-07" db="EMBL/GenBank/DDBJ databases">
        <authorList>
            <person name="Mural R.J."/>
            <person name="Adams M.D."/>
            <person name="Myers E.W."/>
            <person name="Smith H.O."/>
            <person name="Venter J.C."/>
        </authorList>
    </citation>
    <scope>NUCLEOTIDE SEQUENCE [LARGE SCALE GENOMIC DNA]</scope>
</reference>
<reference key="6">
    <citation type="journal article" date="2004" name="Genome Res.">
        <title>The status, quality, and expansion of the NIH full-length cDNA project: the Mammalian Gene Collection (MGC).</title>
        <authorList>
            <consortium name="The MGC Project Team"/>
        </authorList>
    </citation>
    <scope>NUCLEOTIDE SEQUENCE [LARGE SCALE MRNA] (ISOFORM 4)</scope>
    <source>
        <tissue>Testis</tissue>
    </source>
</reference>
<feature type="chain" id="PRO_0000152489" description="Phospholipase A and acyltransferase 5">
    <location>
        <begin position="1"/>
        <end position="270"/>
    </location>
</feature>
<feature type="domain" description="LRAT" evidence="3">
    <location>
        <begin position="127"/>
        <end position="240"/>
    </location>
</feature>
<feature type="region of interest" description="Disordered" evidence="4">
    <location>
        <begin position="1"/>
        <end position="54"/>
    </location>
</feature>
<feature type="region of interest" description="Disordered" evidence="4">
    <location>
        <begin position="70"/>
        <end position="122"/>
    </location>
</feature>
<feature type="compositionally biased region" description="Polar residues" evidence="4">
    <location>
        <begin position="24"/>
        <end position="54"/>
    </location>
</feature>
<feature type="compositionally biased region" description="Polar residues" evidence="4">
    <location>
        <begin position="100"/>
        <end position="116"/>
    </location>
</feature>
<feature type="active site" evidence="3">
    <location>
        <position position="137"/>
    </location>
</feature>
<feature type="active site" evidence="3">
    <location>
        <position position="149"/>
    </location>
</feature>
<feature type="active site" description="Acyl-thioester intermediate" evidence="3">
    <location>
        <position position="224"/>
    </location>
</feature>
<feature type="splice variant" id="VSP_044623" description="In isoform 4 and isoform 3." evidence="6 7 8 9">
    <original>M</original>
    <variation>MIPGLGGPWSAPPCRRVVPAGPSGM</variation>
    <location>
        <position position="1"/>
    </location>
</feature>
<feature type="splice variant" id="VSP_007448" description="In isoform 3." evidence="7">
    <original>GNPRPRPGDLIEIFRIGYEHWAIYVEDDCVVHLA</original>
    <variation>VRIPGIHRMSVLVSWSLLTASCFTLRLINICTDM</variation>
    <location>
        <begin position="118"/>
        <end position="151"/>
    </location>
</feature>
<feature type="splice variant" id="VSP_007449" description="In isoform 3." evidence="7">
    <location>
        <begin position="152"/>
        <end position="270"/>
    </location>
</feature>
<feature type="splice variant" id="VSP_007450" description="In isoform 2." evidence="7">
    <original>EHALVEGAKAAGAVLSAVVDSIRPKPITA</original>
    <variation>YFVELGNHRKHSENLLRTFPVMKNSP</variation>
    <location>
        <begin position="242"/>
        <end position="270"/>
    </location>
</feature>
<feature type="sequence conflict" description="In Ref. 3; BAB24741." evidence="10" ref="3">
    <original>P</original>
    <variation>S</variation>
    <location>
        <position position="21"/>
    </location>
</feature>
<feature type="sequence conflict" description="In Ref. 3; BAB24741." evidence="10" ref="3">
    <original>L</original>
    <variation>Q</variation>
    <location>
        <position position="180"/>
    </location>
</feature>
<evidence type="ECO:0000250" key="1">
    <source>
        <dbReference type="UniProtKB" id="Q4KLN5"/>
    </source>
</evidence>
<evidence type="ECO:0000250" key="2">
    <source>
        <dbReference type="UniProtKB" id="Q96KN8"/>
    </source>
</evidence>
<evidence type="ECO:0000255" key="3">
    <source>
        <dbReference type="PROSITE-ProRule" id="PRU01283"/>
    </source>
</evidence>
<evidence type="ECO:0000256" key="4">
    <source>
        <dbReference type="SAM" id="MobiDB-lite"/>
    </source>
</evidence>
<evidence type="ECO:0000269" key="5">
    <source>
    </source>
</evidence>
<evidence type="ECO:0000303" key="6">
    <source>
    </source>
</evidence>
<evidence type="ECO:0000303" key="7">
    <source>
    </source>
</evidence>
<evidence type="ECO:0000303" key="8">
    <source>
    </source>
</evidence>
<evidence type="ECO:0000303" key="9">
    <source ref="2"/>
</evidence>
<evidence type="ECO:0000305" key="10"/>
<evidence type="ECO:0000312" key="11">
    <source>
        <dbReference type="MGI" id="MGI:1913977"/>
    </source>
</evidence>
<dbReference type="EC" id="2.3.1.-" evidence="5"/>
<dbReference type="EC" id="3.1.1.32" evidence="5"/>
<dbReference type="EC" id="3.1.1.4" evidence="5"/>
<dbReference type="EMBL" id="AB447517">
    <property type="protein sequence ID" value="BAH11080.1"/>
    <property type="molecule type" value="mRNA"/>
</dbReference>
<dbReference type="EMBL" id="AB261168">
    <property type="protein sequence ID" value="BAF41149.1"/>
    <property type="molecule type" value="mRNA"/>
</dbReference>
<dbReference type="EMBL" id="AK006527">
    <property type="protein sequence ID" value="BAB24636.2"/>
    <property type="molecule type" value="mRNA"/>
</dbReference>
<dbReference type="EMBL" id="AK006790">
    <property type="protein sequence ID" value="BAB24741.1"/>
    <property type="molecule type" value="mRNA"/>
</dbReference>
<dbReference type="EMBL" id="AK007015">
    <property type="protein sequence ID" value="BAB24828.1"/>
    <property type="molecule type" value="mRNA"/>
</dbReference>
<dbReference type="EMBL" id="AK014971">
    <property type="protein sequence ID" value="BAB29646.1"/>
    <property type="molecule type" value="mRNA"/>
</dbReference>
<dbReference type="EMBL" id="AC109225">
    <property type="status" value="NOT_ANNOTATED_CDS"/>
    <property type="molecule type" value="Genomic_DNA"/>
</dbReference>
<dbReference type="EMBL" id="CH466612">
    <property type="protein sequence ID" value="EDL33320.1"/>
    <property type="molecule type" value="Genomic_DNA"/>
</dbReference>
<dbReference type="EMBL" id="BC061008">
    <property type="protein sequence ID" value="AAH61008.1"/>
    <property type="molecule type" value="mRNA"/>
</dbReference>
<dbReference type="CCDS" id="CCDS29530.1">
    <molecule id="Q9CPX5-1"/>
</dbReference>
<dbReference type="RefSeq" id="NP_080007.2">
    <molecule id="Q9CPX5-1"/>
    <property type="nucleotide sequence ID" value="NM_025731.3"/>
</dbReference>
<dbReference type="SMR" id="Q9CPX5"/>
<dbReference type="FunCoup" id="Q9CPX5">
    <property type="interactions" value="166"/>
</dbReference>
<dbReference type="STRING" id="10090.ENSMUSP00000025929"/>
<dbReference type="SwissLipids" id="SLP:000001127">
    <molecule id="Q9CPX5-4"/>
</dbReference>
<dbReference type="iPTMnet" id="Q9CPX5"/>
<dbReference type="PaxDb" id="10090-ENSMUSP00000025929"/>
<dbReference type="ProteomicsDB" id="267159">
    <molecule id="Q9CPX5-1"/>
</dbReference>
<dbReference type="ProteomicsDB" id="267160">
    <molecule id="Q9CPX5-2"/>
</dbReference>
<dbReference type="ProteomicsDB" id="267161">
    <molecule id="Q9CPX5-3"/>
</dbReference>
<dbReference type="ProteomicsDB" id="267162">
    <molecule id="Q9CPX5-4"/>
</dbReference>
<dbReference type="Antibodypedia" id="43875">
    <property type="antibodies" value="78 antibodies from 18 providers"/>
</dbReference>
<dbReference type="Ensembl" id="ENSMUST00000025929.12">
    <molecule id="Q9CPX5-1"/>
    <property type="protein sequence ID" value="ENSMUSP00000025929.6"/>
    <property type="gene ID" value="ENSMUSG00000024973.18"/>
</dbReference>
<dbReference type="Ensembl" id="ENSMUST00000239394.2">
    <molecule id="Q9CPX5-4"/>
    <property type="protein sequence ID" value="ENSMUSP00000159309.2"/>
    <property type="gene ID" value="ENSMUSG00000024973.18"/>
</dbReference>
<dbReference type="GeneID" id="66727"/>
<dbReference type="KEGG" id="mmu:66727"/>
<dbReference type="UCSC" id="uc008glm.1">
    <molecule id="Q9CPX5-3"/>
    <property type="organism name" value="mouse"/>
</dbReference>
<dbReference type="UCSC" id="uc008gln.1">
    <molecule id="Q9CPX5-4"/>
    <property type="organism name" value="mouse"/>
</dbReference>
<dbReference type="AGR" id="MGI:1913977"/>
<dbReference type="CTD" id="117245"/>
<dbReference type="MGI" id="MGI:1913977">
    <property type="gene designation" value="Plaat5"/>
</dbReference>
<dbReference type="VEuPathDB" id="HostDB:ENSMUSG00000024973"/>
<dbReference type="eggNOG" id="ENOG502S0JN">
    <property type="taxonomic scope" value="Eukaryota"/>
</dbReference>
<dbReference type="GeneTree" id="ENSGT00940000162436"/>
<dbReference type="HOGENOM" id="CLU_070482_0_0_1"/>
<dbReference type="InParanoid" id="Q9CPX5"/>
<dbReference type="OMA" id="VKYSRLQ"/>
<dbReference type="Reactome" id="R-MMU-1482839">
    <property type="pathway name" value="Acyl chain remodelling of PE"/>
</dbReference>
<dbReference type="BioGRID-ORCS" id="66727">
    <property type="hits" value="0 hits in 77 CRISPR screens"/>
</dbReference>
<dbReference type="PRO" id="PR:Q9CPX5"/>
<dbReference type="Proteomes" id="UP000000589">
    <property type="component" value="Chromosome 19"/>
</dbReference>
<dbReference type="RNAct" id="Q9CPX5">
    <property type="molecule type" value="protein"/>
</dbReference>
<dbReference type="Bgee" id="ENSMUSG00000024973">
    <property type="expression patterns" value="Expressed in seminiferous tubule of testis and 24 other cell types or tissues"/>
</dbReference>
<dbReference type="ExpressionAtlas" id="Q9CPX5">
    <property type="expression patterns" value="baseline and differential"/>
</dbReference>
<dbReference type="GO" id="GO:0005829">
    <property type="term" value="C:cytosol"/>
    <property type="evidence" value="ECO:0007669"/>
    <property type="project" value="UniProtKB-SubCell"/>
</dbReference>
<dbReference type="GO" id="GO:0016410">
    <property type="term" value="F:N-acyltransferase activity"/>
    <property type="evidence" value="ECO:0000314"/>
    <property type="project" value="MGI"/>
</dbReference>
<dbReference type="GO" id="GO:0008970">
    <property type="term" value="F:phospholipase A1 activity"/>
    <property type="evidence" value="ECO:0000250"/>
    <property type="project" value="UniProtKB"/>
</dbReference>
<dbReference type="GO" id="GO:0004623">
    <property type="term" value="F:phospholipase A2 activity"/>
    <property type="evidence" value="ECO:0000250"/>
    <property type="project" value="UniProtKB"/>
</dbReference>
<dbReference type="GO" id="GO:0070292">
    <property type="term" value="P:N-acylphosphatidylethanolamine metabolic process"/>
    <property type="evidence" value="ECO:0000314"/>
    <property type="project" value="MGI"/>
</dbReference>
<dbReference type="FunFam" id="3.90.1720.10:FF:000002">
    <property type="entry name" value="HRAS like suppressor 2"/>
    <property type="match status" value="1"/>
</dbReference>
<dbReference type="Gene3D" id="3.90.1720.10">
    <property type="entry name" value="endopeptidase domain like (from Nostoc punctiforme)"/>
    <property type="match status" value="1"/>
</dbReference>
<dbReference type="InterPro" id="IPR051496">
    <property type="entry name" value="H-rev107_PLA/AT"/>
</dbReference>
<dbReference type="InterPro" id="IPR007053">
    <property type="entry name" value="LRAT_dom"/>
</dbReference>
<dbReference type="PANTHER" id="PTHR13943">
    <property type="entry name" value="HRAS-LIKE SUPPRESSOR - RELATED"/>
    <property type="match status" value="1"/>
</dbReference>
<dbReference type="PANTHER" id="PTHR13943:SF2">
    <property type="entry name" value="PHOSPHOLIPASE A AND ACYLTRANSFERASE 5"/>
    <property type="match status" value="1"/>
</dbReference>
<dbReference type="Pfam" id="PF04970">
    <property type="entry name" value="LRAT"/>
    <property type="match status" value="1"/>
</dbReference>
<dbReference type="PROSITE" id="PS51934">
    <property type="entry name" value="LRAT"/>
    <property type="match status" value="1"/>
</dbReference>
<name>PLAT5_MOUSE</name>
<keyword id="KW-0012">Acyltransferase</keyword>
<keyword id="KW-0025">Alternative splicing</keyword>
<keyword id="KW-0963">Cytoplasm</keyword>
<keyword id="KW-0378">Hydrolase</keyword>
<keyword id="KW-0443">Lipid metabolism</keyword>
<keyword id="KW-1185">Reference proteome</keyword>
<keyword id="KW-0808">Transferase</keyword>
<sequence>MGLSPAASGEFGIRLSRVPWPRPTQISKTSSTESSDTQSATGQSTVPHSDSASSQALLVQFLPKQLKQDRRLEQARSFQQGEKPETSLELTPSKKRTELIPTSNSEIESTQKNQAVEGNPRPRPGDLIEIFRIGYEHWAIYVEDDCVVHLAPPSEFEAGSITSIFSNRAVVKYSRLEDVLHGCSWKINNKLDGTYLPLPVDKIMQRTKNMINKIVQYSLIEGNCEHFVNDLRYGVPRSQQVEHALVEGAKAAGAVLSAVVDSIRPKPITA</sequence>
<comment type="function">
    <text evidence="2 5">Exhibits both phospholipase A1/2 and acyltransferase activities (By similarity). Shows phospholipase A1 (PLA1) and A2 (PLA2) activity, catalyzing the calcium-independent release of fatty acids from the sn-1 or sn-2 position of glycerophospholipids (By similarity). Shows N-acyltransferase activity, catalyzing the calcium-independent transfer of a fatty acyl group at the sn-1 position of phosphatidylcholine (PC) and other glycerophospholipids to the primary amine of phosphatidylethanolamine (PE), forming N-acylphosphatidylethanolamine (NAPE), which serves as precursor for N-acylethanolamines (NAEs) (PubMed:19000777).</text>
</comment>
<comment type="catalytic activity">
    <reaction evidence="5">
        <text>a 1,2-diacyl-sn-glycero-3-phosphocholine + H2O = a 1-acyl-sn-glycero-3-phosphocholine + a fatty acid + H(+)</text>
        <dbReference type="Rhea" id="RHEA:15801"/>
        <dbReference type="ChEBI" id="CHEBI:15377"/>
        <dbReference type="ChEBI" id="CHEBI:15378"/>
        <dbReference type="ChEBI" id="CHEBI:28868"/>
        <dbReference type="ChEBI" id="CHEBI:57643"/>
        <dbReference type="ChEBI" id="CHEBI:58168"/>
        <dbReference type="EC" id="3.1.1.4"/>
    </reaction>
</comment>
<comment type="catalytic activity">
    <reaction evidence="5">
        <text>a 1,2-diacyl-sn-glycero-3-phosphocholine + H2O = a 2-acyl-sn-glycero-3-phosphocholine + a fatty acid + H(+)</text>
        <dbReference type="Rhea" id="RHEA:18689"/>
        <dbReference type="ChEBI" id="CHEBI:15377"/>
        <dbReference type="ChEBI" id="CHEBI:15378"/>
        <dbReference type="ChEBI" id="CHEBI:28868"/>
        <dbReference type="ChEBI" id="CHEBI:57643"/>
        <dbReference type="ChEBI" id="CHEBI:57875"/>
        <dbReference type="EC" id="3.1.1.32"/>
    </reaction>
</comment>
<comment type="catalytic activity">
    <reaction evidence="5">
        <text>1-hexadecanoyl-2-(5Z,8Z,11Z,14Z-eicosatetraenoyl)-sn-glycero-3-phosphocholine + 1,2-di-(9Z-octadecenoyl)-sn-glycero-3-phosphoethanolamine = N-(5Z,8Z,11Z,14Z-eicosatetraenoyl)-1,2-di-(9Z-octadecenoyl)-sn-glycero-3-phosphoethanolamine + 1-hexadecanoyl-sn-glycero-3-phosphocholine + H(+)</text>
        <dbReference type="Rhea" id="RHEA:45476"/>
        <dbReference type="ChEBI" id="CHEBI:15378"/>
        <dbReference type="ChEBI" id="CHEBI:72998"/>
        <dbReference type="ChEBI" id="CHEBI:73003"/>
        <dbReference type="ChEBI" id="CHEBI:74986"/>
        <dbReference type="ChEBI" id="CHEBI:85277"/>
    </reaction>
    <physiologicalReaction direction="left-to-right" evidence="5">
        <dbReference type="Rhea" id="RHEA:45477"/>
    </physiologicalReaction>
</comment>
<comment type="catalytic activity">
    <reaction evidence="5">
        <text>1,2-di-(9Z-octadecenoyl)-sn-glycero-3-phosphoethanolamine + 1,2-dihexadecanoyl-sn-glycero-3-phosphocholine = N-hexadecanoyl-1,2-di-(9Z-octadecenoyl)-sn-glycero-3-phosphoethanolamine + 1-hexadecanoyl-sn-glycero-3-phosphocholine + H(+)</text>
        <dbReference type="Rhea" id="RHEA:45176"/>
        <dbReference type="ChEBI" id="CHEBI:15378"/>
        <dbReference type="ChEBI" id="CHEBI:72998"/>
        <dbReference type="ChEBI" id="CHEBI:72999"/>
        <dbReference type="ChEBI" id="CHEBI:74986"/>
        <dbReference type="ChEBI" id="CHEBI:78097"/>
    </reaction>
    <physiologicalReaction direction="left-to-right" evidence="5">
        <dbReference type="Rhea" id="RHEA:45177"/>
    </physiologicalReaction>
</comment>
<comment type="catalytic activity">
    <reaction evidence="5">
        <text>1,2-di-(9Z-octadecenoyl)-sn-glycero-3-phosphoethanolamine + 1,2-dihexadecanoyl-sn-glycero-3-phosphocholine = N-hexadecanoyl-1,2-di-(9Z-octadecenoyl)-sn-glycero-3-phosphoethanolamine + 2-hexadecanoyl-sn-glycero-3-phosphocholine + H(+)</text>
        <dbReference type="Rhea" id="RHEA:45172"/>
        <dbReference type="ChEBI" id="CHEBI:15378"/>
        <dbReference type="ChEBI" id="CHEBI:72999"/>
        <dbReference type="ChEBI" id="CHEBI:74986"/>
        <dbReference type="ChEBI" id="CHEBI:76078"/>
        <dbReference type="ChEBI" id="CHEBI:78097"/>
    </reaction>
    <physiologicalReaction direction="left-to-right" evidence="5">
        <dbReference type="Rhea" id="RHEA:45173"/>
    </physiologicalReaction>
</comment>
<comment type="catalytic activity">
    <reaction evidence="5">
        <text>a 1,2-diacyl-sn-glycero-3-phosphoethanolamine + a 1,2-diacyl-sn-glycero-3-phosphocholine = an N-acyl-1,2-diacyl-sn-glycero-3-phosphoethanolamine + a 1-acyl-sn-glycero-3-phosphocholine + H(+)</text>
        <dbReference type="Rhea" id="RHEA:45192"/>
        <dbReference type="ChEBI" id="CHEBI:15378"/>
        <dbReference type="ChEBI" id="CHEBI:57643"/>
        <dbReference type="ChEBI" id="CHEBI:58168"/>
        <dbReference type="ChEBI" id="CHEBI:62537"/>
        <dbReference type="ChEBI" id="CHEBI:64612"/>
    </reaction>
    <physiologicalReaction direction="left-to-right" evidence="5">
        <dbReference type="Rhea" id="RHEA:45193"/>
    </physiologicalReaction>
</comment>
<comment type="catalytic activity">
    <reaction evidence="5">
        <text>a 1,2-diacyl-sn-glycero-3-phosphoethanolamine + a 1,2-diacyl-sn-glycero-3-phosphocholine = an N-acyl-1,2-diacyl-sn-glycero-3-phosphoethanolamine + a 2-acyl-sn-glycero-3-phosphocholine + H(+)</text>
        <dbReference type="Rhea" id="RHEA:45188"/>
        <dbReference type="ChEBI" id="CHEBI:15378"/>
        <dbReference type="ChEBI" id="CHEBI:57643"/>
        <dbReference type="ChEBI" id="CHEBI:57875"/>
        <dbReference type="ChEBI" id="CHEBI:62537"/>
        <dbReference type="ChEBI" id="CHEBI:64612"/>
    </reaction>
    <physiologicalReaction direction="left-to-right" evidence="5">
        <dbReference type="Rhea" id="RHEA:45189"/>
    </physiologicalReaction>
</comment>
<comment type="catalytic activity">
    <reaction evidence="1">
        <text>1-hexadecanoyl-2-(9Z-octadecenoyl)-sn-glycero-3-phosphocholine + 1,2-di-(9Z-octadecenoyl)-sn-glycero-3-phosphoethanolamine = N,1,2-tri-(9Z-octadecenoyl)-sn-glycero-3-phosphoethanolamine + 1-hexadecanoyl-sn-glycero-3-phosphocholine + H(+)</text>
        <dbReference type="Rhea" id="RHEA:56504"/>
        <dbReference type="ChEBI" id="CHEBI:15378"/>
        <dbReference type="ChEBI" id="CHEBI:72998"/>
        <dbReference type="ChEBI" id="CHEBI:73001"/>
        <dbReference type="ChEBI" id="CHEBI:74986"/>
        <dbReference type="ChEBI" id="CHEBI:85291"/>
    </reaction>
    <physiologicalReaction direction="left-to-right" evidence="1">
        <dbReference type="Rhea" id="RHEA:56505"/>
    </physiologicalReaction>
</comment>
<comment type="subcellular location">
    <subcellularLocation>
        <location evidence="1">Cytoplasm</location>
        <location evidence="1">Cytosol</location>
    </subcellularLocation>
</comment>
<comment type="alternative products">
    <event type="alternative splicing"/>
    <isoform>
        <id>Q9CPX5-1</id>
        <name>1</name>
        <sequence type="displayed"/>
    </isoform>
    <isoform>
        <id>Q9CPX5-2</id>
        <name>2</name>
        <sequence type="described" ref="VSP_007450"/>
    </isoform>
    <isoform>
        <id>Q9CPX5-3</id>
        <name>3</name>
        <sequence type="described" ref="VSP_044623 VSP_007448 VSP_007449"/>
    </isoform>
    <isoform>
        <id>Q9CPX5-4</id>
        <name>4</name>
        <sequence type="described" ref="VSP_044623"/>
    </isoform>
</comment>
<comment type="tissue specificity">
    <text evidence="5">Isoform 4 shows highest expression level in testis.</text>
</comment>
<comment type="similarity">
    <text evidence="10">Belongs to the H-rev107 family.</text>
</comment>
<proteinExistence type="evidence at protein level"/>
<gene>
    <name evidence="11" type="primary">Plaat5</name>
    <name evidence="11" type="synonym">Hrasls5</name>
    <name type="synonym">Hrlp5</name>
</gene>
<protein>
    <recommendedName>
        <fullName evidence="2">Phospholipase A and acyltransferase 5</fullName>
    </recommendedName>
    <alternativeName>
        <fullName evidence="8">Ca(2+)-independent N-acyltransferase</fullName>
        <shortName evidence="8">iNAT</shortName>
        <ecNumber evidence="5">2.3.1.-</ecNumber>
        <ecNumber evidence="5">3.1.1.32</ecNumber>
        <ecNumber evidence="5">3.1.1.4</ecNumber>
    </alternativeName>
    <alternativeName>
        <fullName>H-rev107-like protein 5</fullName>
    </alternativeName>
    <alternativeName>
        <fullName evidence="11">HRAS-like suppressor 5</fullName>
        <shortName>HRSL5</shortName>
    </alternativeName>
</protein>
<accession>Q9CPX5</accession>
<accession>Q6P8Y6</accession>
<accession>Q9CVQ2</accession>
<accession>Q9CVS0</accession>
<organism>
    <name type="scientific">Mus musculus</name>
    <name type="common">Mouse</name>
    <dbReference type="NCBI Taxonomy" id="10090"/>
    <lineage>
        <taxon>Eukaryota</taxon>
        <taxon>Metazoa</taxon>
        <taxon>Chordata</taxon>
        <taxon>Craniata</taxon>
        <taxon>Vertebrata</taxon>
        <taxon>Euteleostomi</taxon>
        <taxon>Mammalia</taxon>
        <taxon>Eutheria</taxon>
        <taxon>Euarchontoglires</taxon>
        <taxon>Glires</taxon>
        <taxon>Rodentia</taxon>
        <taxon>Myomorpha</taxon>
        <taxon>Muroidea</taxon>
        <taxon>Muridae</taxon>
        <taxon>Murinae</taxon>
        <taxon>Mus</taxon>
        <taxon>Mus</taxon>
    </lineage>
</organism>